<proteinExistence type="evidence at protein level"/>
<reference key="1">
    <citation type="journal article" date="2017" name="Genome Biol.">
        <title>Comparative genomics reveals high biological diversity and specific adaptations in the industrially and medically important fungal genus Aspergillus.</title>
        <authorList>
            <person name="de Vries R.P."/>
            <person name="Riley R."/>
            <person name="Wiebenga A."/>
            <person name="Aguilar-Osorio G."/>
            <person name="Amillis S."/>
            <person name="Uchima C.A."/>
            <person name="Anderluh G."/>
            <person name="Asadollahi M."/>
            <person name="Askin M."/>
            <person name="Barry K."/>
            <person name="Battaglia E."/>
            <person name="Bayram O."/>
            <person name="Benocci T."/>
            <person name="Braus-Stromeyer S.A."/>
            <person name="Caldana C."/>
            <person name="Canovas D."/>
            <person name="Cerqueira G.C."/>
            <person name="Chen F."/>
            <person name="Chen W."/>
            <person name="Choi C."/>
            <person name="Clum A."/>
            <person name="Dos Santos R.A."/>
            <person name="Damasio A.R."/>
            <person name="Diallinas G."/>
            <person name="Emri T."/>
            <person name="Fekete E."/>
            <person name="Flipphi M."/>
            <person name="Freyberg S."/>
            <person name="Gallo A."/>
            <person name="Gournas C."/>
            <person name="Habgood R."/>
            <person name="Hainaut M."/>
            <person name="Harispe M.L."/>
            <person name="Henrissat B."/>
            <person name="Hilden K.S."/>
            <person name="Hope R."/>
            <person name="Hossain A."/>
            <person name="Karabika E."/>
            <person name="Karaffa L."/>
            <person name="Karanyi Z."/>
            <person name="Krasevec N."/>
            <person name="Kuo A."/>
            <person name="Kusch H."/>
            <person name="LaButti K."/>
            <person name="Lagendijk E.L."/>
            <person name="Lapidus A."/>
            <person name="Levasseur A."/>
            <person name="Lindquist E."/>
            <person name="Lipzen A."/>
            <person name="Logrieco A.F."/>
            <person name="MacCabe A."/>
            <person name="Maekelae M.R."/>
            <person name="Malavazi I."/>
            <person name="Melin P."/>
            <person name="Meyer V."/>
            <person name="Mielnichuk N."/>
            <person name="Miskei M."/>
            <person name="Molnar A.P."/>
            <person name="Mule G."/>
            <person name="Ngan C.Y."/>
            <person name="Orejas M."/>
            <person name="Orosz E."/>
            <person name="Ouedraogo J.P."/>
            <person name="Overkamp K.M."/>
            <person name="Park H.-S."/>
            <person name="Perrone G."/>
            <person name="Piumi F."/>
            <person name="Punt P.J."/>
            <person name="Ram A.F."/>
            <person name="Ramon A."/>
            <person name="Rauscher S."/>
            <person name="Record E."/>
            <person name="Riano-Pachon D.M."/>
            <person name="Robert V."/>
            <person name="Roehrig J."/>
            <person name="Ruller R."/>
            <person name="Salamov A."/>
            <person name="Salih N.S."/>
            <person name="Samson R.A."/>
            <person name="Sandor E."/>
            <person name="Sanguinetti M."/>
            <person name="Schuetze T."/>
            <person name="Sepcic K."/>
            <person name="Shelest E."/>
            <person name="Sherlock G."/>
            <person name="Sophianopoulou V."/>
            <person name="Squina F.M."/>
            <person name="Sun H."/>
            <person name="Susca A."/>
            <person name="Todd R.B."/>
            <person name="Tsang A."/>
            <person name="Unkles S.E."/>
            <person name="van de Wiele N."/>
            <person name="van Rossen-Uffink D."/>
            <person name="Oliveira J.V."/>
            <person name="Vesth T.C."/>
            <person name="Visser J."/>
            <person name="Yu J.-H."/>
            <person name="Zhou M."/>
            <person name="Andersen M.R."/>
            <person name="Archer D.B."/>
            <person name="Baker S.E."/>
            <person name="Benoit I."/>
            <person name="Brakhage A.A."/>
            <person name="Braus G.H."/>
            <person name="Fischer R."/>
            <person name="Frisvad J.C."/>
            <person name="Goldman G.H."/>
            <person name="Houbraken J."/>
            <person name="Oakley B."/>
            <person name="Pocsi I."/>
            <person name="Scazzocchio C."/>
            <person name="Seiboth B."/>
            <person name="vanKuyk P.A."/>
            <person name="Wortman J."/>
            <person name="Dyer P.S."/>
            <person name="Grigoriev I.V."/>
        </authorList>
    </citation>
    <scope>NUCLEOTIDE SEQUENCE [LARGE SCALE GENOMIC DNA]</scope>
    <source>
        <strain>ATCC 16872 / CBS 172.66 / WB 5094</strain>
    </source>
</reference>
<reference key="2">
    <citation type="journal article" date="2024" name="Acta Pharm. Sin. B (APSB)">
        <title>Genomics-driven derivatization of the bioactive fungal sesterterpenoid variecolin: Creation of an unnatural analogue with improved anticancer properties.</title>
        <authorList>
            <person name="Yan D."/>
            <person name="Arakelyan J."/>
            <person name="Wan T."/>
            <person name="Raina R."/>
            <person name="Chan T.K."/>
            <person name="Ahn D."/>
            <person name="Kushnarev V."/>
            <person name="Cheung T.K."/>
            <person name="Chan H.C."/>
            <person name="Choi I."/>
            <person name="Ho P.Y."/>
            <person name="Hu F."/>
            <person name="Kim Y."/>
            <person name="Lau H.L."/>
            <person name="Law Y.L."/>
            <person name="Leung C.S."/>
            <person name="Tong C.Y."/>
            <person name="Wong K.K."/>
            <person name="Yim W.L."/>
            <person name="Karnaukhov N.S."/>
            <person name="Kong R.Y.C."/>
            <person name="Babak M.V."/>
            <person name="Matsuda Y."/>
        </authorList>
    </citation>
    <scope>FUNCTION</scope>
    <scope>CATALYTIC ACTIVITY</scope>
    <scope>PATHWAY</scope>
    <scope>BIOTECHNOLOGY</scope>
</reference>
<gene>
    <name evidence="4" type="primary">vrcB</name>
    <name type="ORF">ASPACDRAFT_53318</name>
</gene>
<name>VRCB_ASPA1</name>
<organism>
    <name type="scientific">Aspergillus aculeatus (strain ATCC 16872 / CBS 172.66 / WB 5094)</name>
    <dbReference type="NCBI Taxonomy" id="690307"/>
    <lineage>
        <taxon>Eukaryota</taxon>
        <taxon>Fungi</taxon>
        <taxon>Dikarya</taxon>
        <taxon>Ascomycota</taxon>
        <taxon>Pezizomycotina</taxon>
        <taxon>Eurotiomycetes</taxon>
        <taxon>Eurotiomycetidae</taxon>
        <taxon>Eurotiales</taxon>
        <taxon>Aspergillaceae</taxon>
        <taxon>Aspergillus</taxon>
        <taxon>Aspergillus subgen. Circumdati</taxon>
    </lineage>
</organism>
<sequence>MYGIYGLFFAAVALYSVALVIYRLYLHPLSRFPGPKIAAATGWYEFYHEVIRGGMYIHEIQRMHREYGPIIRINPYEIVINDPDYYTTVYVASNTRRSEKWYTLQGTGLEGKALSFFSHFRTCRTRMHMTDQIVGAMGMTMGHELHRRRRKHFDPFFSRLGVTQIEGVILDEIQLLTDRLEGNRKSGRTIQMEHVMAAFTGDIVTKICSEKSPDMIRHPDFGKEWYVTIHTYQLQVHLFVQFPYLISLTQLIPRGLVMHFSPGAAAFKSLHQYAFDHITEAKKDMGRAVKVQQEAGRSSVFRHVLSSDMPGTERETERLAREALQLFGAGTATLVRAFSMIFYHVLSDPQMRGQLREELKDIMAGYPAKRPTWQELERLPYLHGIVKEGLRLSYGVMRHLARVSPDQPLQFREWTIPAGTPVGMSSHSLHSDPETFPEPARFLPERWMKDRHHPNMNRNWVPFARGSRMCIGMNLALAEMYWVLAVLFRPGAPQLELFETTEADVVPVRDYVGGIPEFGTKGVRVRVV</sequence>
<keyword id="KW-0349">Heme</keyword>
<keyword id="KW-0408">Iron</keyword>
<keyword id="KW-0472">Membrane</keyword>
<keyword id="KW-0479">Metal-binding</keyword>
<keyword id="KW-0503">Monooxygenase</keyword>
<keyword id="KW-0560">Oxidoreductase</keyword>
<keyword id="KW-1185">Reference proteome</keyword>
<keyword id="KW-0812">Transmembrane</keyword>
<keyword id="KW-1133">Transmembrane helix</keyword>
<dbReference type="EC" id="1.-.-.-" evidence="3"/>
<dbReference type="EMBL" id="KV878980">
    <property type="protein sequence ID" value="OJJ98432.1"/>
    <property type="molecule type" value="Genomic_DNA"/>
</dbReference>
<dbReference type="RefSeq" id="XP_020054772.1">
    <property type="nucleotide sequence ID" value="XM_020202736.1"/>
</dbReference>
<dbReference type="SMR" id="A0A1L9WQK2"/>
<dbReference type="STRING" id="690307.A0A1L9WQK2"/>
<dbReference type="GeneID" id="30976550"/>
<dbReference type="VEuPathDB" id="FungiDB:ASPACDRAFT_53318"/>
<dbReference type="OMA" id="SDVKQAH"/>
<dbReference type="OrthoDB" id="3945418at2759"/>
<dbReference type="UniPathway" id="UPA00213"/>
<dbReference type="Proteomes" id="UP000184546">
    <property type="component" value="Unassembled WGS sequence"/>
</dbReference>
<dbReference type="GO" id="GO:0016020">
    <property type="term" value="C:membrane"/>
    <property type="evidence" value="ECO:0007669"/>
    <property type="project" value="UniProtKB-SubCell"/>
</dbReference>
<dbReference type="GO" id="GO:0020037">
    <property type="term" value="F:heme binding"/>
    <property type="evidence" value="ECO:0007669"/>
    <property type="project" value="InterPro"/>
</dbReference>
<dbReference type="GO" id="GO:0005506">
    <property type="term" value="F:iron ion binding"/>
    <property type="evidence" value="ECO:0007669"/>
    <property type="project" value="InterPro"/>
</dbReference>
<dbReference type="GO" id="GO:0004497">
    <property type="term" value="F:monooxygenase activity"/>
    <property type="evidence" value="ECO:0007669"/>
    <property type="project" value="UniProtKB-KW"/>
</dbReference>
<dbReference type="GO" id="GO:0016705">
    <property type="term" value="F:oxidoreductase activity, acting on paired donors, with incorporation or reduction of molecular oxygen"/>
    <property type="evidence" value="ECO:0007669"/>
    <property type="project" value="InterPro"/>
</dbReference>
<dbReference type="CDD" id="cd11062">
    <property type="entry name" value="CYP58-like"/>
    <property type="match status" value="1"/>
</dbReference>
<dbReference type="Gene3D" id="1.10.630.10">
    <property type="entry name" value="Cytochrome P450"/>
    <property type="match status" value="1"/>
</dbReference>
<dbReference type="InterPro" id="IPR001128">
    <property type="entry name" value="Cyt_P450"/>
</dbReference>
<dbReference type="InterPro" id="IPR002401">
    <property type="entry name" value="Cyt_P450_E_grp-I"/>
</dbReference>
<dbReference type="InterPro" id="IPR036396">
    <property type="entry name" value="Cyt_P450_sf"/>
</dbReference>
<dbReference type="InterPro" id="IPR050121">
    <property type="entry name" value="Cytochrome_P450_monoxygenase"/>
</dbReference>
<dbReference type="PANTHER" id="PTHR24305">
    <property type="entry name" value="CYTOCHROME P450"/>
    <property type="match status" value="1"/>
</dbReference>
<dbReference type="PANTHER" id="PTHR24305:SF157">
    <property type="entry name" value="N-ACETYLTRYPTOPHAN 6-HYDROXYLASE IVOC-RELATED"/>
    <property type="match status" value="1"/>
</dbReference>
<dbReference type="Pfam" id="PF00067">
    <property type="entry name" value="p450"/>
    <property type="match status" value="1"/>
</dbReference>
<dbReference type="PRINTS" id="PR00463">
    <property type="entry name" value="EP450I"/>
</dbReference>
<dbReference type="SUPFAM" id="SSF48264">
    <property type="entry name" value="Cytochrome P450"/>
    <property type="match status" value="1"/>
</dbReference>
<comment type="function">
    <text evidence="3">Cytochrome P450 monooxygenase; part of the gene cluster that mediates the biosynthesis of the sesterterpene variecolin (PubMed:38261827). The first step in the pathway is performed by the variecoladiene synthase vrcA that possesses both prenyl transferase and terpene cyclase activity, converting isopentenyl diphosphate and dimethylallyl diphosphate into geranylfarnesyl pyrophosphate (GFPP) and then converting GFPP into the tetracyclic variecoladiene (PubMed:38261827). The cytochrome P450 monooxygenase vrcB then catalyzes multiple oxidations at C-5 and C-20 positions to yield variecolin (PubMed:38261827).</text>
</comment>
<comment type="catalytic activity">
    <reaction evidence="3">
        <text>variecoladiene + 4 reduced [NADPH--hemoprotein reductase] + 4 O2 = variecolin + 4 oxidized [NADPH--hemoprotein reductase] + 6 H2O + 4 H(+)</text>
        <dbReference type="Rhea" id="RHEA:79691"/>
        <dbReference type="Rhea" id="RHEA-COMP:11964"/>
        <dbReference type="Rhea" id="RHEA-COMP:11965"/>
        <dbReference type="ChEBI" id="CHEBI:15377"/>
        <dbReference type="ChEBI" id="CHEBI:15378"/>
        <dbReference type="ChEBI" id="CHEBI:15379"/>
        <dbReference type="ChEBI" id="CHEBI:57618"/>
        <dbReference type="ChEBI" id="CHEBI:58210"/>
        <dbReference type="ChEBI" id="CHEBI:66349"/>
        <dbReference type="ChEBI" id="CHEBI:230481"/>
    </reaction>
    <physiologicalReaction direction="left-to-right" evidence="3">
        <dbReference type="Rhea" id="RHEA:79692"/>
    </physiologicalReaction>
</comment>
<comment type="cofactor">
    <cofactor evidence="1">
        <name>heme</name>
        <dbReference type="ChEBI" id="CHEBI:30413"/>
    </cofactor>
</comment>
<comment type="pathway">
    <text evidence="3">Secondary metabolite biosynthesis; terpenoid biosynthesis.</text>
</comment>
<comment type="subcellular location">
    <subcellularLocation>
        <location evidence="2">Membrane</location>
        <topology evidence="2">Single-pass membrane protein</topology>
    </subcellularLocation>
</comment>
<comment type="biotechnology">
    <text evidence="3">Variecolin and its derivatives produced by employing P450 monooxygenases from other fungal terpenoid pathways exhibit anticancer activity, thus, the skeleton of variecolin could be considered a privileged scaffold for developing anticancer agents.</text>
</comment>
<comment type="similarity">
    <text evidence="5">Belongs to the cytochrome P450 family.</text>
</comment>
<protein>
    <recommendedName>
        <fullName evidence="4">Cytochrome P450 monooxygenase vrcB</fullName>
        <ecNumber evidence="3">1.-.-.-</ecNumber>
    </recommendedName>
    <alternativeName>
        <fullName evidence="4">Variecolin biosynthesis cluster protein B</fullName>
    </alternativeName>
</protein>
<feature type="chain" id="PRO_0000460551" description="Cytochrome P450 monooxygenase vrcB">
    <location>
        <begin position="1"/>
        <end position="528"/>
    </location>
</feature>
<feature type="transmembrane region" description="Helical" evidence="2">
    <location>
        <begin position="5"/>
        <end position="27"/>
    </location>
</feature>
<feature type="binding site" description="axial binding residue" evidence="1">
    <location>
        <position position="470"/>
    </location>
    <ligand>
        <name>heme</name>
        <dbReference type="ChEBI" id="CHEBI:30413"/>
    </ligand>
    <ligandPart>
        <name>Fe</name>
        <dbReference type="ChEBI" id="CHEBI:18248"/>
    </ligandPart>
</feature>
<accession>A0A1L9WQK2</accession>
<evidence type="ECO:0000250" key="1">
    <source>
        <dbReference type="UniProtKB" id="P04798"/>
    </source>
</evidence>
<evidence type="ECO:0000255" key="2"/>
<evidence type="ECO:0000269" key="3">
    <source>
    </source>
</evidence>
<evidence type="ECO:0000303" key="4">
    <source>
    </source>
</evidence>
<evidence type="ECO:0000305" key="5"/>